<proteinExistence type="inferred from homology"/>
<organism>
    <name type="scientific">Verminephrobacter eiseniae (strain EF01-2)</name>
    <dbReference type="NCBI Taxonomy" id="391735"/>
    <lineage>
        <taxon>Bacteria</taxon>
        <taxon>Pseudomonadati</taxon>
        <taxon>Pseudomonadota</taxon>
        <taxon>Betaproteobacteria</taxon>
        <taxon>Burkholderiales</taxon>
        <taxon>Comamonadaceae</taxon>
        <taxon>Verminephrobacter</taxon>
    </lineage>
</organism>
<comment type="function">
    <text evidence="1">Cell wall formation.</text>
</comment>
<comment type="catalytic activity">
    <reaction evidence="1">
        <text>UDP-N-acetyl-alpha-D-muramate + L-alanine + ATP = UDP-N-acetyl-alpha-D-muramoyl-L-alanine + ADP + phosphate + H(+)</text>
        <dbReference type="Rhea" id="RHEA:23372"/>
        <dbReference type="ChEBI" id="CHEBI:15378"/>
        <dbReference type="ChEBI" id="CHEBI:30616"/>
        <dbReference type="ChEBI" id="CHEBI:43474"/>
        <dbReference type="ChEBI" id="CHEBI:57972"/>
        <dbReference type="ChEBI" id="CHEBI:70757"/>
        <dbReference type="ChEBI" id="CHEBI:83898"/>
        <dbReference type="ChEBI" id="CHEBI:456216"/>
        <dbReference type="EC" id="6.3.2.8"/>
    </reaction>
</comment>
<comment type="pathway">
    <text evidence="1">Cell wall biogenesis; peptidoglycan biosynthesis.</text>
</comment>
<comment type="subcellular location">
    <subcellularLocation>
        <location evidence="1">Cytoplasm</location>
    </subcellularLocation>
</comment>
<comment type="similarity">
    <text evidence="1">Belongs to the MurCDEF family.</text>
</comment>
<evidence type="ECO:0000255" key="1">
    <source>
        <dbReference type="HAMAP-Rule" id="MF_00046"/>
    </source>
</evidence>
<protein>
    <recommendedName>
        <fullName evidence="1">UDP-N-acetylmuramate--L-alanine ligase</fullName>
        <ecNumber evidence="1">6.3.2.8</ecNumber>
    </recommendedName>
    <alternativeName>
        <fullName evidence="1">UDP-N-acetylmuramoyl-L-alanine synthetase</fullName>
    </alternativeName>
</protein>
<sequence>MKHAIRHIHFVGLGGAGMSGIAEVLFNLGYRISGSDLVDSATLRRLQGLGIGTCLGHAGAHIEGADAVVTSTAVTADNPEVLAARAKKIPVVPRALMLAELMRLKQGIAIAGTHGKTTTTSLVTSVLAEAGLDPTFVIGGRLNSVGAHAKLGSGDYIVVEADESDASFLNLLPVMAVVTNIDADHMETYGHDFGRLKGAFVDFLHRMPFYGTAILCVDSPAVRDIMPGVTCPITSYGLSEDAQVRAVDLRADGARMHFTVQRSNGVTLPDLAVQLNLAGAHNVLNALSAIAVAVELNIPDAAVLRALAGFKGVGRRFQSYGQLPAKDGGQFSVIDDYGHHPVEMAATLAAARGAFPGRRLVLAFQPHRYSRTRDCFEDFVRVMGSADAVLLTEVYAAGEAPVVAADGRSLARALRVAGRVEPVFVADVADLPQAIAENARDGDLLLCMGAGSIGAVPGKLLEMLRNDEHTAMQRTAP</sequence>
<dbReference type="EC" id="6.3.2.8" evidence="1"/>
<dbReference type="EMBL" id="CP000542">
    <property type="protein sequence ID" value="ABM60269.1"/>
    <property type="molecule type" value="Genomic_DNA"/>
</dbReference>
<dbReference type="RefSeq" id="WP_011812253.1">
    <property type="nucleotide sequence ID" value="NC_008786.1"/>
</dbReference>
<dbReference type="SMR" id="A1WRL2"/>
<dbReference type="STRING" id="391735.Veis_4571"/>
<dbReference type="GeneID" id="76462864"/>
<dbReference type="KEGG" id="vei:Veis_4571"/>
<dbReference type="eggNOG" id="COG0773">
    <property type="taxonomic scope" value="Bacteria"/>
</dbReference>
<dbReference type="HOGENOM" id="CLU_028104_2_2_4"/>
<dbReference type="OrthoDB" id="9804126at2"/>
<dbReference type="UniPathway" id="UPA00219"/>
<dbReference type="Proteomes" id="UP000000374">
    <property type="component" value="Chromosome"/>
</dbReference>
<dbReference type="GO" id="GO:0005737">
    <property type="term" value="C:cytoplasm"/>
    <property type="evidence" value="ECO:0007669"/>
    <property type="project" value="UniProtKB-SubCell"/>
</dbReference>
<dbReference type="GO" id="GO:0005524">
    <property type="term" value="F:ATP binding"/>
    <property type="evidence" value="ECO:0007669"/>
    <property type="project" value="UniProtKB-UniRule"/>
</dbReference>
<dbReference type="GO" id="GO:0008763">
    <property type="term" value="F:UDP-N-acetylmuramate-L-alanine ligase activity"/>
    <property type="evidence" value="ECO:0007669"/>
    <property type="project" value="UniProtKB-UniRule"/>
</dbReference>
<dbReference type="GO" id="GO:0051301">
    <property type="term" value="P:cell division"/>
    <property type="evidence" value="ECO:0007669"/>
    <property type="project" value="UniProtKB-KW"/>
</dbReference>
<dbReference type="GO" id="GO:0071555">
    <property type="term" value="P:cell wall organization"/>
    <property type="evidence" value="ECO:0007669"/>
    <property type="project" value="UniProtKB-KW"/>
</dbReference>
<dbReference type="GO" id="GO:0009252">
    <property type="term" value="P:peptidoglycan biosynthetic process"/>
    <property type="evidence" value="ECO:0007669"/>
    <property type="project" value="UniProtKB-UniRule"/>
</dbReference>
<dbReference type="GO" id="GO:0008360">
    <property type="term" value="P:regulation of cell shape"/>
    <property type="evidence" value="ECO:0007669"/>
    <property type="project" value="UniProtKB-KW"/>
</dbReference>
<dbReference type="FunFam" id="3.40.1190.10:FF:000001">
    <property type="entry name" value="UDP-N-acetylmuramate--L-alanine ligase"/>
    <property type="match status" value="1"/>
</dbReference>
<dbReference type="Gene3D" id="3.90.190.20">
    <property type="entry name" value="Mur ligase, C-terminal domain"/>
    <property type="match status" value="1"/>
</dbReference>
<dbReference type="Gene3D" id="3.40.1190.10">
    <property type="entry name" value="Mur-like, catalytic domain"/>
    <property type="match status" value="1"/>
</dbReference>
<dbReference type="Gene3D" id="3.40.50.720">
    <property type="entry name" value="NAD(P)-binding Rossmann-like Domain"/>
    <property type="match status" value="1"/>
</dbReference>
<dbReference type="HAMAP" id="MF_00046">
    <property type="entry name" value="MurC"/>
    <property type="match status" value="1"/>
</dbReference>
<dbReference type="InterPro" id="IPR036565">
    <property type="entry name" value="Mur-like_cat_sf"/>
</dbReference>
<dbReference type="InterPro" id="IPR004101">
    <property type="entry name" value="Mur_ligase_C"/>
</dbReference>
<dbReference type="InterPro" id="IPR036615">
    <property type="entry name" value="Mur_ligase_C_dom_sf"/>
</dbReference>
<dbReference type="InterPro" id="IPR013221">
    <property type="entry name" value="Mur_ligase_cen"/>
</dbReference>
<dbReference type="InterPro" id="IPR000713">
    <property type="entry name" value="Mur_ligase_N"/>
</dbReference>
<dbReference type="InterPro" id="IPR050061">
    <property type="entry name" value="MurCDEF_pg_biosynth"/>
</dbReference>
<dbReference type="InterPro" id="IPR005758">
    <property type="entry name" value="UDP-N-AcMur_Ala_ligase_MurC"/>
</dbReference>
<dbReference type="NCBIfam" id="TIGR01082">
    <property type="entry name" value="murC"/>
    <property type="match status" value="1"/>
</dbReference>
<dbReference type="PANTHER" id="PTHR43445:SF3">
    <property type="entry name" value="UDP-N-ACETYLMURAMATE--L-ALANINE LIGASE"/>
    <property type="match status" value="1"/>
</dbReference>
<dbReference type="PANTHER" id="PTHR43445">
    <property type="entry name" value="UDP-N-ACETYLMURAMATE--L-ALANINE LIGASE-RELATED"/>
    <property type="match status" value="1"/>
</dbReference>
<dbReference type="Pfam" id="PF01225">
    <property type="entry name" value="Mur_ligase"/>
    <property type="match status" value="1"/>
</dbReference>
<dbReference type="Pfam" id="PF02875">
    <property type="entry name" value="Mur_ligase_C"/>
    <property type="match status" value="1"/>
</dbReference>
<dbReference type="Pfam" id="PF08245">
    <property type="entry name" value="Mur_ligase_M"/>
    <property type="match status" value="1"/>
</dbReference>
<dbReference type="SUPFAM" id="SSF51984">
    <property type="entry name" value="MurCD N-terminal domain"/>
    <property type="match status" value="1"/>
</dbReference>
<dbReference type="SUPFAM" id="SSF53623">
    <property type="entry name" value="MurD-like peptide ligases, catalytic domain"/>
    <property type="match status" value="1"/>
</dbReference>
<dbReference type="SUPFAM" id="SSF53244">
    <property type="entry name" value="MurD-like peptide ligases, peptide-binding domain"/>
    <property type="match status" value="1"/>
</dbReference>
<keyword id="KW-0067">ATP-binding</keyword>
<keyword id="KW-0131">Cell cycle</keyword>
<keyword id="KW-0132">Cell division</keyword>
<keyword id="KW-0133">Cell shape</keyword>
<keyword id="KW-0961">Cell wall biogenesis/degradation</keyword>
<keyword id="KW-0963">Cytoplasm</keyword>
<keyword id="KW-0436">Ligase</keyword>
<keyword id="KW-0547">Nucleotide-binding</keyword>
<keyword id="KW-0573">Peptidoglycan synthesis</keyword>
<keyword id="KW-1185">Reference proteome</keyword>
<name>MURC_VEREI</name>
<feature type="chain" id="PRO_1000004433" description="UDP-N-acetylmuramate--L-alanine ligase">
    <location>
        <begin position="1"/>
        <end position="477"/>
    </location>
</feature>
<feature type="binding site" evidence="1">
    <location>
        <begin position="112"/>
        <end position="118"/>
    </location>
    <ligand>
        <name>ATP</name>
        <dbReference type="ChEBI" id="CHEBI:30616"/>
    </ligand>
</feature>
<reference key="1">
    <citation type="submission" date="2006-12" db="EMBL/GenBank/DDBJ databases">
        <title>Complete sequence of chromosome 1 of Verminephrobacter eiseniae EF01-2.</title>
        <authorList>
            <person name="Copeland A."/>
            <person name="Lucas S."/>
            <person name="Lapidus A."/>
            <person name="Barry K."/>
            <person name="Detter J.C."/>
            <person name="Glavina del Rio T."/>
            <person name="Dalin E."/>
            <person name="Tice H."/>
            <person name="Pitluck S."/>
            <person name="Chertkov O."/>
            <person name="Brettin T."/>
            <person name="Bruce D."/>
            <person name="Han C."/>
            <person name="Tapia R."/>
            <person name="Gilna P."/>
            <person name="Schmutz J."/>
            <person name="Larimer F."/>
            <person name="Land M."/>
            <person name="Hauser L."/>
            <person name="Kyrpides N."/>
            <person name="Kim E."/>
            <person name="Stahl D."/>
            <person name="Richardson P."/>
        </authorList>
    </citation>
    <scope>NUCLEOTIDE SEQUENCE [LARGE SCALE GENOMIC DNA]</scope>
    <source>
        <strain>EF01-2</strain>
    </source>
</reference>
<accession>A1WRL2</accession>
<gene>
    <name evidence="1" type="primary">murC</name>
    <name type="ordered locus">Veis_4571</name>
</gene>